<accession>C4XNW0</accession>
<comment type="function">
    <text evidence="1">This protein binds to 23S rRNA in the presence of protein L20.</text>
</comment>
<comment type="subunit">
    <text evidence="1">Part of the 50S ribosomal subunit. Contacts protein L20.</text>
</comment>
<comment type="similarity">
    <text evidence="1">Belongs to the bacterial ribosomal protein bL21 family.</text>
</comment>
<keyword id="KW-0687">Ribonucleoprotein</keyword>
<keyword id="KW-0689">Ribosomal protein</keyword>
<keyword id="KW-0694">RNA-binding</keyword>
<keyword id="KW-0699">rRNA-binding</keyword>
<sequence>MYAIVMAGGKQYKVQEGATITVDLLAAEAGSEYVLDKVLMIGGGEAKIGAPYVAGAAVTCQVAGHVKGKKIVVFHKRRRKDSHKKQGHRQGYTQLKVTGIQA</sequence>
<feature type="chain" id="PRO_1000214887" description="Large ribosomal subunit protein bL21">
    <location>
        <begin position="1"/>
        <end position="102"/>
    </location>
</feature>
<proteinExistence type="inferred from homology"/>
<dbReference type="EMBL" id="AP010904">
    <property type="protein sequence ID" value="BAH77461.1"/>
    <property type="molecule type" value="Genomic_DNA"/>
</dbReference>
<dbReference type="RefSeq" id="WP_006919251.1">
    <property type="nucleotide sequence ID" value="NC_012796.1"/>
</dbReference>
<dbReference type="SMR" id="C4XNW0"/>
<dbReference type="STRING" id="573370.DMR_39700"/>
<dbReference type="KEGG" id="dma:DMR_39700"/>
<dbReference type="eggNOG" id="COG0261">
    <property type="taxonomic scope" value="Bacteria"/>
</dbReference>
<dbReference type="HOGENOM" id="CLU_061463_3_2_7"/>
<dbReference type="OrthoDB" id="9813334at2"/>
<dbReference type="Proteomes" id="UP000009071">
    <property type="component" value="Chromosome"/>
</dbReference>
<dbReference type="GO" id="GO:0005737">
    <property type="term" value="C:cytoplasm"/>
    <property type="evidence" value="ECO:0007669"/>
    <property type="project" value="UniProtKB-ARBA"/>
</dbReference>
<dbReference type="GO" id="GO:1990904">
    <property type="term" value="C:ribonucleoprotein complex"/>
    <property type="evidence" value="ECO:0007669"/>
    <property type="project" value="UniProtKB-KW"/>
</dbReference>
<dbReference type="GO" id="GO:0005840">
    <property type="term" value="C:ribosome"/>
    <property type="evidence" value="ECO:0007669"/>
    <property type="project" value="UniProtKB-KW"/>
</dbReference>
<dbReference type="GO" id="GO:0019843">
    <property type="term" value="F:rRNA binding"/>
    <property type="evidence" value="ECO:0007669"/>
    <property type="project" value="UniProtKB-UniRule"/>
</dbReference>
<dbReference type="GO" id="GO:0003735">
    <property type="term" value="F:structural constituent of ribosome"/>
    <property type="evidence" value="ECO:0007669"/>
    <property type="project" value="InterPro"/>
</dbReference>
<dbReference type="GO" id="GO:0006412">
    <property type="term" value="P:translation"/>
    <property type="evidence" value="ECO:0007669"/>
    <property type="project" value="UniProtKB-UniRule"/>
</dbReference>
<dbReference type="HAMAP" id="MF_01363">
    <property type="entry name" value="Ribosomal_bL21"/>
    <property type="match status" value="1"/>
</dbReference>
<dbReference type="InterPro" id="IPR028909">
    <property type="entry name" value="bL21-like"/>
</dbReference>
<dbReference type="InterPro" id="IPR036164">
    <property type="entry name" value="bL21-like_sf"/>
</dbReference>
<dbReference type="InterPro" id="IPR001787">
    <property type="entry name" value="Ribosomal_bL21"/>
</dbReference>
<dbReference type="NCBIfam" id="TIGR00061">
    <property type="entry name" value="L21"/>
    <property type="match status" value="1"/>
</dbReference>
<dbReference type="PANTHER" id="PTHR21349">
    <property type="entry name" value="50S RIBOSOMAL PROTEIN L21"/>
    <property type="match status" value="1"/>
</dbReference>
<dbReference type="PANTHER" id="PTHR21349:SF0">
    <property type="entry name" value="LARGE RIBOSOMAL SUBUNIT PROTEIN BL21M"/>
    <property type="match status" value="1"/>
</dbReference>
<dbReference type="Pfam" id="PF00829">
    <property type="entry name" value="Ribosomal_L21p"/>
    <property type="match status" value="1"/>
</dbReference>
<dbReference type="SUPFAM" id="SSF141091">
    <property type="entry name" value="L21p-like"/>
    <property type="match status" value="1"/>
</dbReference>
<evidence type="ECO:0000255" key="1">
    <source>
        <dbReference type="HAMAP-Rule" id="MF_01363"/>
    </source>
</evidence>
<evidence type="ECO:0000305" key="2"/>
<gene>
    <name evidence="1" type="primary">rplU</name>
    <name type="ordered locus">DMR_39700</name>
</gene>
<organism>
    <name type="scientific">Solidesulfovibrio magneticus (strain ATCC 700980 / DSM 13731 / RS-1)</name>
    <name type="common">Desulfovibrio magneticus</name>
    <dbReference type="NCBI Taxonomy" id="573370"/>
    <lineage>
        <taxon>Bacteria</taxon>
        <taxon>Pseudomonadati</taxon>
        <taxon>Thermodesulfobacteriota</taxon>
        <taxon>Desulfovibrionia</taxon>
        <taxon>Desulfovibrionales</taxon>
        <taxon>Desulfovibrionaceae</taxon>
        <taxon>Solidesulfovibrio</taxon>
    </lineage>
</organism>
<reference key="1">
    <citation type="journal article" date="2009" name="Genome Res.">
        <title>Whole genome sequence of Desulfovibrio magneticus strain RS-1 revealed common gene clusters in magnetotactic bacteria.</title>
        <authorList>
            <person name="Nakazawa H."/>
            <person name="Arakaki A."/>
            <person name="Narita-Yamada S."/>
            <person name="Yashiro I."/>
            <person name="Jinno K."/>
            <person name="Aoki N."/>
            <person name="Tsuruyama A."/>
            <person name="Okamura Y."/>
            <person name="Tanikawa S."/>
            <person name="Fujita N."/>
            <person name="Takeyama H."/>
            <person name="Matsunaga T."/>
        </authorList>
    </citation>
    <scope>NUCLEOTIDE SEQUENCE [LARGE SCALE GENOMIC DNA]</scope>
    <source>
        <strain>ATCC 700980 / DSM 13731 / RS-1</strain>
    </source>
</reference>
<name>RL21_SOLM1</name>
<protein>
    <recommendedName>
        <fullName evidence="1">Large ribosomal subunit protein bL21</fullName>
    </recommendedName>
    <alternativeName>
        <fullName evidence="2">50S ribosomal protein L21</fullName>
    </alternativeName>
</protein>